<name>SHO1_ASPFU</name>
<reference key="1">
    <citation type="journal article" date="2005" name="Nature">
        <title>Genomic sequence of the pathogenic and allergenic filamentous fungus Aspergillus fumigatus.</title>
        <authorList>
            <person name="Nierman W.C."/>
            <person name="Pain A."/>
            <person name="Anderson M.J."/>
            <person name="Wortman J.R."/>
            <person name="Kim H.S."/>
            <person name="Arroyo J."/>
            <person name="Berriman M."/>
            <person name="Abe K."/>
            <person name="Archer D.B."/>
            <person name="Bermejo C."/>
            <person name="Bennett J.W."/>
            <person name="Bowyer P."/>
            <person name="Chen D."/>
            <person name="Collins M."/>
            <person name="Coulsen R."/>
            <person name="Davies R."/>
            <person name="Dyer P.S."/>
            <person name="Farman M.L."/>
            <person name="Fedorova N."/>
            <person name="Fedorova N.D."/>
            <person name="Feldblyum T.V."/>
            <person name="Fischer R."/>
            <person name="Fosker N."/>
            <person name="Fraser A."/>
            <person name="Garcia J.L."/>
            <person name="Garcia M.J."/>
            <person name="Goble A."/>
            <person name="Goldman G.H."/>
            <person name="Gomi K."/>
            <person name="Griffith-Jones S."/>
            <person name="Gwilliam R."/>
            <person name="Haas B.J."/>
            <person name="Haas H."/>
            <person name="Harris D.E."/>
            <person name="Horiuchi H."/>
            <person name="Huang J."/>
            <person name="Humphray S."/>
            <person name="Jimenez J."/>
            <person name="Keller N."/>
            <person name="Khouri H."/>
            <person name="Kitamoto K."/>
            <person name="Kobayashi T."/>
            <person name="Konzack S."/>
            <person name="Kulkarni R."/>
            <person name="Kumagai T."/>
            <person name="Lafton A."/>
            <person name="Latge J.-P."/>
            <person name="Li W."/>
            <person name="Lord A."/>
            <person name="Lu C."/>
            <person name="Majoros W.H."/>
            <person name="May G.S."/>
            <person name="Miller B.L."/>
            <person name="Mohamoud Y."/>
            <person name="Molina M."/>
            <person name="Monod M."/>
            <person name="Mouyna I."/>
            <person name="Mulligan S."/>
            <person name="Murphy L.D."/>
            <person name="O'Neil S."/>
            <person name="Paulsen I."/>
            <person name="Penalva M.A."/>
            <person name="Pertea M."/>
            <person name="Price C."/>
            <person name="Pritchard B.L."/>
            <person name="Quail M.A."/>
            <person name="Rabbinowitsch E."/>
            <person name="Rawlins N."/>
            <person name="Rajandream M.A."/>
            <person name="Reichard U."/>
            <person name="Renauld H."/>
            <person name="Robson G.D."/>
            <person name="Rodriguez de Cordoba S."/>
            <person name="Rodriguez-Pena J.M."/>
            <person name="Ronning C.M."/>
            <person name="Rutter S."/>
            <person name="Salzberg S.L."/>
            <person name="Sanchez M."/>
            <person name="Sanchez-Ferrero J.C."/>
            <person name="Saunders D."/>
            <person name="Seeger K."/>
            <person name="Squares R."/>
            <person name="Squares S."/>
            <person name="Takeuchi M."/>
            <person name="Tekaia F."/>
            <person name="Turner G."/>
            <person name="Vazquez de Aldana C.R."/>
            <person name="Weidman J."/>
            <person name="White O."/>
            <person name="Woodward J.R."/>
            <person name="Yu J.-H."/>
            <person name="Fraser C.M."/>
            <person name="Galagan J.E."/>
            <person name="Asai K."/>
            <person name="Machida M."/>
            <person name="Hall N."/>
            <person name="Barrell B.G."/>
            <person name="Denning D.W."/>
        </authorList>
    </citation>
    <scope>NUCLEOTIDE SEQUENCE [LARGE SCALE GENOMIC DNA]</scope>
    <source>
        <strain>ATCC MYA-4609 / CBS 101355 / FGSC A1100 / Af293</strain>
    </source>
</reference>
<reference key="2">
    <citation type="journal article" date="2008" name="Infect. Immun.">
        <title>The sho1 sensor regulates growth, morphology, and oxidant adaptation in Aspergillus fumigatus but is not essential for development of invasive pulmonary aspergillosis.</title>
        <authorList>
            <person name="Ma Y."/>
            <person name="Qiao J."/>
            <person name="Liu W."/>
            <person name="Wan Z."/>
            <person name="Wang X."/>
            <person name="Calderone R."/>
            <person name="Li R."/>
        </authorList>
    </citation>
    <scope>FUNCTION</scope>
</reference>
<reference key="3">
    <citation type="journal article" date="2009" name="Beijing Da Xue Xue Bao">
        <title>Effect of sho1 gene of Aspergillus fumigatus on adaptation to osmotic pressure and on sensitivity of antifungal drugs.</title>
        <authorList>
            <person name="Ma Y."/>
            <person name="Qiao J.J."/>
            <person name="Liu W."/>
            <person name="Li R.Y."/>
        </authorList>
    </citation>
    <scope>FUNCTION</scope>
</reference>
<organism>
    <name type="scientific">Aspergillus fumigatus (strain ATCC MYA-4609 / CBS 101355 / FGSC A1100 / Af293)</name>
    <name type="common">Neosartorya fumigata</name>
    <dbReference type="NCBI Taxonomy" id="330879"/>
    <lineage>
        <taxon>Eukaryota</taxon>
        <taxon>Fungi</taxon>
        <taxon>Dikarya</taxon>
        <taxon>Ascomycota</taxon>
        <taxon>Pezizomycotina</taxon>
        <taxon>Eurotiomycetes</taxon>
        <taxon>Eurotiomycetidae</taxon>
        <taxon>Eurotiales</taxon>
        <taxon>Aspergillaceae</taxon>
        <taxon>Aspergillus</taxon>
        <taxon>Aspergillus subgen. Fumigati</taxon>
    </lineage>
</organism>
<evidence type="ECO:0000250" key="1"/>
<evidence type="ECO:0000255" key="2"/>
<evidence type="ECO:0000255" key="3">
    <source>
        <dbReference type="PROSITE-ProRule" id="PRU00192"/>
    </source>
</evidence>
<evidence type="ECO:0000256" key="4">
    <source>
        <dbReference type="SAM" id="MobiDB-lite"/>
    </source>
</evidence>
<evidence type="ECO:0000269" key="5">
    <source>
    </source>
</evidence>
<evidence type="ECO:0000269" key="6">
    <source>
    </source>
</evidence>
<evidence type="ECO:0000305" key="7"/>
<sequence length="288" mass="30738">MAKFRASNILGDPFALATVSISILAWLIACIASIISDIKTDYPNYSWWAVAYMFCCIMGVTIVFGSDTGLVYGVAVVGYLSTGLVLTTLAVNSLVYADESSSQAAAAGFILMSMVIVVWIFYFGSSPQATHRGFIDSFALNKESSGAYGNRPMSTAYGPRPDTMSTSAPQMYTSAQLNGFETSSPVSGYPGGGPGSENRSSSQARFGNPSASNVAGNNSGQDEVPPPTEYPYKAKAIYSYDANPEDANEISFSKHEILEVSDVSGRWWQARKSNGETGIAPSNYLILL</sequence>
<gene>
    <name type="primary">sho1</name>
    <name type="ORF">AFUA_5G08420</name>
</gene>
<keyword id="KW-1003">Cell membrane</keyword>
<keyword id="KW-0325">Glycoprotein</keyword>
<keyword id="KW-0472">Membrane</keyword>
<keyword id="KW-1185">Reference proteome</keyword>
<keyword id="KW-0728">SH3 domain</keyword>
<keyword id="KW-0346">Stress response</keyword>
<keyword id="KW-0812">Transmembrane</keyword>
<keyword id="KW-1133">Transmembrane helix</keyword>
<proteinExistence type="inferred from homology"/>
<comment type="function">
    <text evidence="5 6">Plasma membrane osmosensor that activates the high osmolarity glycerol (HOG) MAPK signaling pathway in response to high osmolarity. Regulates radial hyphal growth and germination. Involved in virulence and mediates resistance to oxidative stress.</text>
</comment>
<comment type="subunit">
    <text evidence="1">Forms homooligomers.</text>
</comment>
<comment type="subcellular location">
    <subcellularLocation>
        <location evidence="1">Cell membrane</location>
        <topology evidence="1">Multi-pass membrane protein</topology>
    </subcellularLocation>
</comment>
<comment type="similarity">
    <text evidence="7">Belongs to the SHO1 family.</text>
</comment>
<comment type="sequence caution" evidence="7">
    <conflict type="erroneous initiation">
        <sequence resource="EMBL-CDS" id="EAL91757"/>
    </conflict>
    <text>Extended N-terminus.</text>
</comment>
<feature type="chain" id="PRO_0000410361" description="High osmolarity signaling protein sho1">
    <location>
        <begin position="1"/>
        <end position="288"/>
    </location>
</feature>
<feature type="topological domain" description="Cytoplasmic" evidence="2">
    <location>
        <begin position="1"/>
        <end position="14"/>
    </location>
</feature>
<feature type="transmembrane region" description="Helical" evidence="2">
    <location>
        <begin position="15"/>
        <end position="35"/>
    </location>
</feature>
<feature type="topological domain" description="Extracellular" evidence="2">
    <location>
        <begin position="36"/>
        <end position="44"/>
    </location>
</feature>
<feature type="transmembrane region" description="Helical" evidence="2">
    <location>
        <begin position="45"/>
        <end position="65"/>
    </location>
</feature>
<feature type="topological domain" description="Cytoplasmic" evidence="2">
    <location>
        <begin position="66"/>
        <end position="70"/>
    </location>
</feature>
<feature type="transmembrane region" description="Helical" evidence="2">
    <location>
        <begin position="71"/>
        <end position="91"/>
    </location>
</feature>
<feature type="topological domain" description="Extracellular" evidence="2">
    <location>
        <begin position="92"/>
        <end position="103"/>
    </location>
</feature>
<feature type="transmembrane region" description="Helical" evidence="2">
    <location>
        <begin position="104"/>
        <end position="124"/>
    </location>
</feature>
<feature type="topological domain" description="Cytoplasmic" evidence="2">
    <location>
        <begin position="125"/>
        <end position="288"/>
    </location>
</feature>
<feature type="domain" description="SH3" evidence="3">
    <location>
        <begin position="229"/>
        <end position="288"/>
    </location>
</feature>
<feature type="region of interest" description="Disordered" evidence="4">
    <location>
        <begin position="183"/>
        <end position="230"/>
    </location>
</feature>
<feature type="compositionally biased region" description="Polar residues" evidence="4">
    <location>
        <begin position="197"/>
        <end position="221"/>
    </location>
</feature>
<feature type="glycosylation site" description="N-linked (GlcNAc...) asparagine" evidence="2">
    <location>
        <position position="44"/>
    </location>
</feature>
<dbReference type="EMBL" id="AAHF01000003">
    <property type="protein sequence ID" value="EAL91757.1"/>
    <property type="status" value="ALT_INIT"/>
    <property type="molecule type" value="Genomic_DNA"/>
</dbReference>
<dbReference type="RefSeq" id="XP_753795.1">
    <property type="nucleotide sequence ID" value="XM_748702.1"/>
</dbReference>
<dbReference type="SMR" id="Q4WUG9"/>
<dbReference type="FunCoup" id="Q4WUG9">
    <property type="interactions" value="129"/>
</dbReference>
<dbReference type="STRING" id="330879.Q4WUG9"/>
<dbReference type="GlyCosmos" id="Q4WUG9">
    <property type="glycosylation" value="1 site, No reported glycans"/>
</dbReference>
<dbReference type="GeneID" id="3511405"/>
<dbReference type="KEGG" id="afm:AFUA_5G08420"/>
<dbReference type="eggNOG" id="ENOG502QW7A">
    <property type="taxonomic scope" value="Eukaryota"/>
</dbReference>
<dbReference type="HOGENOM" id="CLU_043316_1_0_1"/>
<dbReference type="InParanoid" id="Q4WUG9"/>
<dbReference type="OrthoDB" id="5983572at2759"/>
<dbReference type="Proteomes" id="UP000002530">
    <property type="component" value="Chromosome 5"/>
</dbReference>
<dbReference type="GO" id="GO:0005886">
    <property type="term" value="C:plasma membrane"/>
    <property type="evidence" value="ECO:0007669"/>
    <property type="project" value="UniProtKB-SubCell"/>
</dbReference>
<dbReference type="GO" id="GO:0030833">
    <property type="term" value="P:regulation of actin filament polymerization"/>
    <property type="evidence" value="ECO:0000318"/>
    <property type="project" value="GO_Central"/>
</dbReference>
<dbReference type="CDD" id="cd11855">
    <property type="entry name" value="SH3_Sho1p"/>
    <property type="match status" value="1"/>
</dbReference>
<dbReference type="FunFam" id="2.30.30.40:FF:000213">
    <property type="entry name" value="High osmolarity signaling protein SHO1"/>
    <property type="match status" value="1"/>
</dbReference>
<dbReference type="Gene3D" id="2.30.30.40">
    <property type="entry name" value="SH3 Domains"/>
    <property type="match status" value="1"/>
</dbReference>
<dbReference type="InterPro" id="IPR036028">
    <property type="entry name" value="SH3-like_dom_sf"/>
</dbReference>
<dbReference type="InterPro" id="IPR001452">
    <property type="entry name" value="SH3_domain"/>
</dbReference>
<dbReference type="InterPro" id="IPR035522">
    <property type="entry name" value="Sho1_SH3"/>
</dbReference>
<dbReference type="PANTHER" id="PTHR15735">
    <property type="entry name" value="FCH AND DOUBLE SH3 DOMAINS PROTEIN"/>
    <property type="match status" value="1"/>
</dbReference>
<dbReference type="PANTHER" id="PTHR15735:SF20">
    <property type="entry name" value="HIGH OSMOLARITY SIGNALING PROTEIN SHO1"/>
    <property type="match status" value="1"/>
</dbReference>
<dbReference type="Pfam" id="PF00018">
    <property type="entry name" value="SH3_1"/>
    <property type="match status" value="1"/>
</dbReference>
<dbReference type="PRINTS" id="PR00452">
    <property type="entry name" value="SH3DOMAIN"/>
</dbReference>
<dbReference type="SMART" id="SM00326">
    <property type="entry name" value="SH3"/>
    <property type="match status" value="1"/>
</dbReference>
<dbReference type="SUPFAM" id="SSF50044">
    <property type="entry name" value="SH3-domain"/>
    <property type="match status" value="1"/>
</dbReference>
<dbReference type="PROSITE" id="PS50002">
    <property type="entry name" value="SH3"/>
    <property type="match status" value="1"/>
</dbReference>
<accession>Q4WUG9</accession>
<protein>
    <recommendedName>
        <fullName>High osmolarity signaling protein sho1</fullName>
    </recommendedName>
    <alternativeName>
        <fullName>Osmosensor sho1</fullName>
    </alternativeName>
</protein>